<evidence type="ECO:0000255" key="1">
    <source>
        <dbReference type="HAMAP-Rule" id="MF_01321"/>
    </source>
</evidence>
<dbReference type="EC" id="2.7.7.6" evidence="1"/>
<dbReference type="EMBL" id="DQ898156">
    <property type="protein sequence ID" value="ABI32416.1"/>
    <property type="molecule type" value="Genomic_DNA"/>
</dbReference>
<dbReference type="RefSeq" id="YP_740109.1">
    <property type="nucleotide sequence ID" value="NC_008325.1"/>
</dbReference>
<dbReference type="SMR" id="Q0G9X0"/>
<dbReference type="GeneID" id="4266719"/>
<dbReference type="GO" id="GO:0009507">
    <property type="term" value="C:chloroplast"/>
    <property type="evidence" value="ECO:0007669"/>
    <property type="project" value="UniProtKB-SubCell"/>
</dbReference>
<dbReference type="GO" id="GO:0000428">
    <property type="term" value="C:DNA-directed RNA polymerase complex"/>
    <property type="evidence" value="ECO:0007669"/>
    <property type="project" value="UniProtKB-KW"/>
</dbReference>
<dbReference type="GO" id="GO:0005739">
    <property type="term" value="C:mitochondrion"/>
    <property type="evidence" value="ECO:0007669"/>
    <property type="project" value="GOC"/>
</dbReference>
<dbReference type="GO" id="GO:0003677">
    <property type="term" value="F:DNA binding"/>
    <property type="evidence" value="ECO:0007669"/>
    <property type="project" value="UniProtKB-UniRule"/>
</dbReference>
<dbReference type="GO" id="GO:0003899">
    <property type="term" value="F:DNA-directed RNA polymerase activity"/>
    <property type="evidence" value="ECO:0007669"/>
    <property type="project" value="UniProtKB-UniRule"/>
</dbReference>
<dbReference type="GO" id="GO:0032549">
    <property type="term" value="F:ribonucleoside binding"/>
    <property type="evidence" value="ECO:0007669"/>
    <property type="project" value="InterPro"/>
</dbReference>
<dbReference type="GO" id="GO:0006351">
    <property type="term" value="P:DNA-templated transcription"/>
    <property type="evidence" value="ECO:0007669"/>
    <property type="project" value="UniProtKB-UniRule"/>
</dbReference>
<dbReference type="CDD" id="cd00653">
    <property type="entry name" value="RNA_pol_B_RPB2"/>
    <property type="match status" value="1"/>
</dbReference>
<dbReference type="FunFam" id="3.90.1110.10:FF:000009">
    <property type="entry name" value="DNA-directed RNA polymerase subunit beta"/>
    <property type="match status" value="1"/>
</dbReference>
<dbReference type="Gene3D" id="2.40.50.100">
    <property type="match status" value="1"/>
</dbReference>
<dbReference type="Gene3D" id="2.40.50.150">
    <property type="match status" value="1"/>
</dbReference>
<dbReference type="Gene3D" id="3.90.1100.10">
    <property type="match status" value="1"/>
</dbReference>
<dbReference type="Gene3D" id="2.30.150.10">
    <property type="entry name" value="DNA-directed RNA polymerase, beta subunit, external 1 domain"/>
    <property type="match status" value="1"/>
</dbReference>
<dbReference type="Gene3D" id="2.40.270.10">
    <property type="entry name" value="DNA-directed RNA polymerase, subunit 2, domain 6"/>
    <property type="match status" value="2"/>
</dbReference>
<dbReference type="Gene3D" id="3.90.1800.10">
    <property type="entry name" value="RNA polymerase alpha subunit dimerisation domain"/>
    <property type="match status" value="1"/>
</dbReference>
<dbReference type="Gene3D" id="3.90.1110.10">
    <property type="entry name" value="RNA polymerase Rpb2, domain 2"/>
    <property type="match status" value="1"/>
</dbReference>
<dbReference type="HAMAP" id="MF_01321">
    <property type="entry name" value="RNApol_bact_RpoB"/>
    <property type="match status" value="1"/>
</dbReference>
<dbReference type="InterPro" id="IPR042107">
    <property type="entry name" value="DNA-dir_RNA_pol_bsu_ext_1_sf"/>
</dbReference>
<dbReference type="InterPro" id="IPR015712">
    <property type="entry name" value="DNA-dir_RNA_pol_su2"/>
</dbReference>
<dbReference type="InterPro" id="IPR007120">
    <property type="entry name" value="DNA-dir_RNAP_su2_dom"/>
</dbReference>
<dbReference type="InterPro" id="IPR037033">
    <property type="entry name" value="DNA-dir_RNAP_su2_hyb_sf"/>
</dbReference>
<dbReference type="InterPro" id="IPR010243">
    <property type="entry name" value="RNA_pol_bsu_bac"/>
</dbReference>
<dbReference type="InterPro" id="IPR007121">
    <property type="entry name" value="RNA_pol_bsu_CS"/>
</dbReference>
<dbReference type="InterPro" id="IPR007642">
    <property type="entry name" value="RNA_pol_Rpb2_2"/>
</dbReference>
<dbReference type="InterPro" id="IPR037034">
    <property type="entry name" value="RNA_pol_Rpb2_2_sf"/>
</dbReference>
<dbReference type="InterPro" id="IPR007645">
    <property type="entry name" value="RNA_pol_Rpb2_3"/>
</dbReference>
<dbReference type="InterPro" id="IPR007641">
    <property type="entry name" value="RNA_pol_Rpb2_7"/>
</dbReference>
<dbReference type="InterPro" id="IPR014724">
    <property type="entry name" value="RNA_pol_RPB2_OB-fold"/>
</dbReference>
<dbReference type="NCBIfam" id="NF001616">
    <property type="entry name" value="PRK00405.1"/>
    <property type="match status" value="1"/>
</dbReference>
<dbReference type="PANTHER" id="PTHR20856">
    <property type="entry name" value="DNA-DIRECTED RNA POLYMERASE I SUBUNIT 2"/>
    <property type="match status" value="1"/>
</dbReference>
<dbReference type="Pfam" id="PF04561">
    <property type="entry name" value="RNA_pol_Rpb2_2"/>
    <property type="match status" value="1"/>
</dbReference>
<dbReference type="Pfam" id="PF04565">
    <property type="entry name" value="RNA_pol_Rpb2_3"/>
    <property type="match status" value="1"/>
</dbReference>
<dbReference type="Pfam" id="PF00562">
    <property type="entry name" value="RNA_pol_Rpb2_6"/>
    <property type="match status" value="1"/>
</dbReference>
<dbReference type="Pfam" id="PF04560">
    <property type="entry name" value="RNA_pol_Rpb2_7"/>
    <property type="match status" value="1"/>
</dbReference>
<dbReference type="SUPFAM" id="SSF64484">
    <property type="entry name" value="beta and beta-prime subunits of DNA dependent RNA-polymerase"/>
    <property type="match status" value="1"/>
</dbReference>
<dbReference type="PROSITE" id="PS01166">
    <property type="entry name" value="RNA_POL_BETA"/>
    <property type="match status" value="1"/>
</dbReference>
<name>RPOB_DAUCA</name>
<organism>
    <name type="scientific">Daucus carota</name>
    <name type="common">Wild carrot</name>
    <dbReference type="NCBI Taxonomy" id="4039"/>
    <lineage>
        <taxon>Eukaryota</taxon>
        <taxon>Viridiplantae</taxon>
        <taxon>Streptophyta</taxon>
        <taxon>Embryophyta</taxon>
        <taxon>Tracheophyta</taxon>
        <taxon>Spermatophyta</taxon>
        <taxon>Magnoliopsida</taxon>
        <taxon>eudicotyledons</taxon>
        <taxon>Gunneridae</taxon>
        <taxon>Pentapetalae</taxon>
        <taxon>asterids</taxon>
        <taxon>campanulids</taxon>
        <taxon>Apiales</taxon>
        <taxon>Apiaceae</taxon>
        <taxon>Apioideae</taxon>
        <taxon>Scandiceae</taxon>
        <taxon>Daucinae</taxon>
        <taxon>Daucus</taxon>
        <taxon>Daucus sect. Daucus</taxon>
    </lineage>
</organism>
<reference key="1">
    <citation type="journal article" date="2006" name="BMC Genomics">
        <title>Complete plastid genome sequence of Daucus carota: implications for biotechnology and phylogeny of angiosperms.</title>
        <authorList>
            <person name="Ruhlman T."/>
            <person name="Lee S.-B."/>
            <person name="Jansen R.K."/>
            <person name="Hostetler J.B."/>
            <person name="Tallon L.J."/>
            <person name="Town C.D."/>
            <person name="Daniell H."/>
        </authorList>
    </citation>
    <scope>NUCLEOTIDE SEQUENCE [LARGE SCALE GENOMIC DNA]</scope>
    <source>
        <strain>cv. Danvers Half-long</strain>
    </source>
</reference>
<gene>
    <name evidence="1" type="primary">rpoB</name>
</gene>
<sequence length="1070" mass="120810">MLRDGNEGMSTIPGFNQIQFEGFCRFMDQGLTEELYKFPKIEDTDQEIEFQLFVETYQLVEPLIKERDAVYESLTYSSEFYISAGLIWKTSRDMQEQTIFLGNIPLMNSLGTSIVNGIYRIVINQILQSPGIYYRSELDHNGISVYTGTIISDWGGRLELEIDKKARIWARVSRKQKISILVLSSAMGSNLREILENVCYPEIFLSFLTDKEKKKIGSKENAILEFYQQFACVGGDPVFSESLCKELQKKFFQQKCELGKIGRRNMNRRLRLDISQNNTFLLPRDILAAADHLIGMKFGMGTLDDMNHLKNKRIRSVADLIQDQLGLALVRLENMIRGTIGGALRHKLIPSPQNLVTSTPLTSTYESFFGLHPLSQVLDRTNPLTQIVHGRKLSYLGPGGLTGRTASFRIRDIHPSHYGRICPIDTSEGINVGLIGSLAIHAKIGRGGSLESPFYEISQRSKGARMLYLSPGKDEYYMVAAGNPLALNQGLQEEQVVPARYRQEFLTIAWEQVHLRSIFSFQYFSIGASLIPFIEHNDANRALMSSNMQRQAVPLSRSEKCIVGTGLERQAALDSGVLAIAEHEGKVIYTDTDKILLSGNGDTLNIPLVMYQRSNKNTCMHQKPQVQRGKYIKKGQILAYGAATIGGELALGKNVLVAYMPWEGYNFEDAVLISERLVYEDIYTSFHIRKYEIQTHVTSQGPERVTREIPHLEAHLLRNLDKNGIVMLGSWVETGEILVGKLTPQMVKESSYAPEDRLLRAILGIQVSTSKETCLKLPIGGRGRVIDVRWIQKRVGSSYNPETIRVYILQKREIKVGDKVAGRHGNKGIISKILPRQDMPYLQDGRPVDMVFNPLGVPSRMNVGQIFECSLGLAGGLLDRHYRIAPFDERYEQEASRKLVFSELYQASKQTATPWVFEPEYPGKSRIFDGRTGDPFEQPVIIGKPYILKLIHQVDDKIHGRSSGHYALVTQQPLRGRAKQGGQRVGEMEVWALEGFGVAYILQEMLTYKSDHIRARQEVLGTTIIGGAIPNPEDAPESFRLLVRELRSLALELNHFFVSEKTFKIKRKEA</sequence>
<protein>
    <recommendedName>
        <fullName evidence="1">DNA-directed RNA polymerase subunit beta</fullName>
        <ecNumber evidence="1">2.7.7.6</ecNumber>
    </recommendedName>
    <alternativeName>
        <fullName evidence="1">PEP</fullName>
    </alternativeName>
    <alternativeName>
        <fullName evidence="1">Plastid-encoded RNA polymerase subunit beta</fullName>
        <shortName evidence="1">RNA polymerase subunit beta</shortName>
    </alternativeName>
</protein>
<comment type="function">
    <text evidence="1">DNA-dependent RNA polymerase catalyzes the transcription of DNA into RNA using the four ribonucleoside triphosphates as substrates.</text>
</comment>
<comment type="catalytic activity">
    <reaction evidence="1">
        <text>RNA(n) + a ribonucleoside 5'-triphosphate = RNA(n+1) + diphosphate</text>
        <dbReference type="Rhea" id="RHEA:21248"/>
        <dbReference type="Rhea" id="RHEA-COMP:14527"/>
        <dbReference type="Rhea" id="RHEA-COMP:17342"/>
        <dbReference type="ChEBI" id="CHEBI:33019"/>
        <dbReference type="ChEBI" id="CHEBI:61557"/>
        <dbReference type="ChEBI" id="CHEBI:140395"/>
        <dbReference type="EC" id="2.7.7.6"/>
    </reaction>
</comment>
<comment type="subunit">
    <text evidence="1">In plastids the minimal PEP RNA polymerase catalytic core is composed of four subunits: alpha, beta, beta', and beta''. When a (nuclear-encoded) sigma factor is associated with the core the holoenzyme is formed, which can initiate transcription.</text>
</comment>
<comment type="subcellular location">
    <subcellularLocation>
        <location>Plastid</location>
        <location>Chloroplast</location>
    </subcellularLocation>
</comment>
<comment type="similarity">
    <text evidence="1">Belongs to the RNA polymerase beta chain family.</text>
</comment>
<geneLocation type="chloroplast"/>
<keyword id="KW-0150">Chloroplast</keyword>
<keyword id="KW-0240">DNA-directed RNA polymerase</keyword>
<keyword id="KW-0548">Nucleotidyltransferase</keyword>
<keyword id="KW-0934">Plastid</keyword>
<keyword id="KW-0804">Transcription</keyword>
<keyword id="KW-0808">Transferase</keyword>
<accession>Q0G9X0</accession>
<feature type="chain" id="PRO_0000276586" description="DNA-directed RNA polymerase subunit beta">
    <location>
        <begin position="1"/>
        <end position="1070"/>
    </location>
</feature>
<proteinExistence type="inferred from homology"/>